<keyword id="KW-0963">Cytoplasm</keyword>
<keyword id="KW-0227">DNA damage</keyword>
<keyword id="KW-0234">DNA repair</keyword>
<keyword id="KW-0235">DNA replication</keyword>
<keyword id="KW-0238">DNA-binding</keyword>
<keyword id="KW-0239">DNA-directed DNA polymerase</keyword>
<keyword id="KW-0460">Magnesium</keyword>
<keyword id="KW-0479">Metal-binding</keyword>
<keyword id="KW-0515">Mutator protein</keyword>
<keyword id="KW-0548">Nucleotidyltransferase</keyword>
<keyword id="KW-1185">Reference proteome</keyword>
<keyword id="KW-0808">Transferase</keyword>
<accession>Q8PCW8</accession>
<gene>
    <name evidence="1" type="primary">dinB</name>
    <name type="synonym">dinP</name>
    <name type="ordered locus">XCC0583</name>
</gene>
<proteinExistence type="inferred from homology"/>
<reference key="1">
    <citation type="journal article" date="2002" name="Nature">
        <title>Comparison of the genomes of two Xanthomonas pathogens with differing host specificities.</title>
        <authorList>
            <person name="da Silva A.C.R."/>
            <person name="Ferro J.A."/>
            <person name="Reinach F.C."/>
            <person name="Farah C.S."/>
            <person name="Furlan L.R."/>
            <person name="Quaggio R.B."/>
            <person name="Monteiro-Vitorello C.B."/>
            <person name="Van Sluys M.A."/>
            <person name="Almeida N.F. Jr."/>
            <person name="Alves L.M.C."/>
            <person name="do Amaral A.M."/>
            <person name="Bertolini M.C."/>
            <person name="Camargo L.E.A."/>
            <person name="Camarotte G."/>
            <person name="Cannavan F."/>
            <person name="Cardozo J."/>
            <person name="Chambergo F."/>
            <person name="Ciapina L.P."/>
            <person name="Cicarelli R.M.B."/>
            <person name="Coutinho L.L."/>
            <person name="Cursino-Santos J.R."/>
            <person name="El-Dorry H."/>
            <person name="Faria J.B."/>
            <person name="Ferreira A.J.S."/>
            <person name="Ferreira R.C.C."/>
            <person name="Ferro M.I.T."/>
            <person name="Formighieri E.F."/>
            <person name="Franco M.C."/>
            <person name="Greggio C.C."/>
            <person name="Gruber A."/>
            <person name="Katsuyama A.M."/>
            <person name="Kishi L.T."/>
            <person name="Leite R.P."/>
            <person name="Lemos E.G.M."/>
            <person name="Lemos M.V.F."/>
            <person name="Locali E.C."/>
            <person name="Machado M.A."/>
            <person name="Madeira A.M.B.N."/>
            <person name="Martinez-Rossi N.M."/>
            <person name="Martins E.C."/>
            <person name="Meidanis J."/>
            <person name="Menck C.F.M."/>
            <person name="Miyaki C.Y."/>
            <person name="Moon D.H."/>
            <person name="Moreira L.M."/>
            <person name="Novo M.T.M."/>
            <person name="Okura V.K."/>
            <person name="Oliveira M.C."/>
            <person name="Oliveira V.R."/>
            <person name="Pereira H.A."/>
            <person name="Rossi A."/>
            <person name="Sena J.A.D."/>
            <person name="Silva C."/>
            <person name="de Souza R.F."/>
            <person name="Spinola L.A.F."/>
            <person name="Takita M.A."/>
            <person name="Tamura R.E."/>
            <person name="Teixeira E.C."/>
            <person name="Tezza R.I.D."/>
            <person name="Trindade dos Santos M."/>
            <person name="Truffi D."/>
            <person name="Tsai S.M."/>
            <person name="White F.F."/>
            <person name="Setubal J.C."/>
            <person name="Kitajima J.P."/>
        </authorList>
    </citation>
    <scope>NUCLEOTIDE SEQUENCE [LARGE SCALE GENOMIC DNA]</scope>
    <source>
        <strain>ATCC 33913 / DSM 3586 / NCPPB 528 / LMG 568 / P 25</strain>
    </source>
</reference>
<organism>
    <name type="scientific">Xanthomonas campestris pv. campestris (strain ATCC 33913 / DSM 3586 / NCPPB 528 / LMG 568 / P 25)</name>
    <dbReference type="NCBI Taxonomy" id="190485"/>
    <lineage>
        <taxon>Bacteria</taxon>
        <taxon>Pseudomonadati</taxon>
        <taxon>Pseudomonadota</taxon>
        <taxon>Gammaproteobacteria</taxon>
        <taxon>Lysobacterales</taxon>
        <taxon>Lysobacteraceae</taxon>
        <taxon>Xanthomonas</taxon>
    </lineage>
</organism>
<feature type="chain" id="PRO_0000173967" description="DNA polymerase IV">
    <location>
        <begin position="1"/>
        <end position="359"/>
    </location>
</feature>
<feature type="domain" description="UmuC" evidence="1">
    <location>
        <begin position="4"/>
        <end position="184"/>
    </location>
</feature>
<feature type="active site" evidence="1">
    <location>
        <position position="103"/>
    </location>
</feature>
<feature type="binding site" evidence="1">
    <location>
        <position position="8"/>
    </location>
    <ligand>
        <name>Mg(2+)</name>
        <dbReference type="ChEBI" id="CHEBI:18420"/>
    </ligand>
</feature>
<feature type="binding site" evidence="1">
    <location>
        <position position="102"/>
    </location>
    <ligand>
        <name>Mg(2+)</name>
        <dbReference type="ChEBI" id="CHEBI:18420"/>
    </ligand>
</feature>
<feature type="site" description="Substrate discrimination" evidence="1">
    <location>
        <position position="13"/>
    </location>
</feature>
<dbReference type="EC" id="2.7.7.7" evidence="1"/>
<dbReference type="EMBL" id="AE008922">
    <property type="protein sequence ID" value="AAM39899.1"/>
    <property type="molecule type" value="Genomic_DNA"/>
</dbReference>
<dbReference type="RefSeq" id="NP_635975.1">
    <property type="nucleotide sequence ID" value="NC_003902.1"/>
</dbReference>
<dbReference type="RefSeq" id="WP_011035828.1">
    <property type="nucleotide sequence ID" value="NC_003902.1"/>
</dbReference>
<dbReference type="SMR" id="Q8PCW8"/>
<dbReference type="STRING" id="190485.XCC0583"/>
<dbReference type="EnsemblBacteria" id="AAM39899">
    <property type="protein sequence ID" value="AAM39899"/>
    <property type="gene ID" value="XCC0583"/>
</dbReference>
<dbReference type="GeneID" id="58014855"/>
<dbReference type="KEGG" id="xcc:XCC0583"/>
<dbReference type="PATRIC" id="fig|190485.4.peg.642"/>
<dbReference type="eggNOG" id="COG0389">
    <property type="taxonomic scope" value="Bacteria"/>
</dbReference>
<dbReference type="HOGENOM" id="CLU_012348_1_2_6"/>
<dbReference type="OrthoDB" id="9808813at2"/>
<dbReference type="Proteomes" id="UP000001010">
    <property type="component" value="Chromosome"/>
</dbReference>
<dbReference type="GO" id="GO:0005737">
    <property type="term" value="C:cytoplasm"/>
    <property type="evidence" value="ECO:0007669"/>
    <property type="project" value="UniProtKB-SubCell"/>
</dbReference>
<dbReference type="GO" id="GO:0003684">
    <property type="term" value="F:damaged DNA binding"/>
    <property type="evidence" value="ECO:0007669"/>
    <property type="project" value="InterPro"/>
</dbReference>
<dbReference type="GO" id="GO:0003887">
    <property type="term" value="F:DNA-directed DNA polymerase activity"/>
    <property type="evidence" value="ECO:0000318"/>
    <property type="project" value="GO_Central"/>
</dbReference>
<dbReference type="GO" id="GO:0000287">
    <property type="term" value="F:magnesium ion binding"/>
    <property type="evidence" value="ECO:0007669"/>
    <property type="project" value="UniProtKB-UniRule"/>
</dbReference>
<dbReference type="GO" id="GO:0006261">
    <property type="term" value="P:DNA-templated DNA replication"/>
    <property type="evidence" value="ECO:0007669"/>
    <property type="project" value="UniProtKB-UniRule"/>
</dbReference>
<dbReference type="GO" id="GO:0042276">
    <property type="term" value="P:error-prone translesion synthesis"/>
    <property type="evidence" value="ECO:0000318"/>
    <property type="project" value="GO_Central"/>
</dbReference>
<dbReference type="GO" id="GO:0009432">
    <property type="term" value="P:SOS response"/>
    <property type="evidence" value="ECO:0000318"/>
    <property type="project" value="GO_Central"/>
</dbReference>
<dbReference type="CDD" id="cd03586">
    <property type="entry name" value="PolY_Pol_IV_kappa"/>
    <property type="match status" value="1"/>
</dbReference>
<dbReference type="FunFam" id="1.10.150.20:FF:000019">
    <property type="entry name" value="DNA polymerase IV"/>
    <property type="match status" value="1"/>
</dbReference>
<dbReference type="FunFam" id="3.30.1490.100:FF:000004">
    <property type="entry name" value="DNA polymerase IV"/>
    <property type="match status" value="1"/>
</dbReference>
<dbReference type="FunFam" id="3.30.70.270:FF:000002">
    <property type="entry name" value="DNA polymerase IV"/>
    <property type="match status" value="1"/>
</dbReference>
<dbReference type="FunFam" id="3.40.1170.60:FF:000001">
    <property type="entry name" value="DNA polymerase IV"/>
    <property type="match status" value="1"/>
</dbReference>
<dbReference type="Gene3D" id="3.30.70.270">
    <property type="match status" value="1"/>
</dbReference>
<dbReference type="Gene3D" id="3.40.1170.60">
    <property type="match status" value="1"/>
</dbReference>
<dbReference type="Gene3D" id="1.10.150.20">
    <property type="entry name" value="5' to 3' exonuclease, C-terminal subdomain"/>
    <property type="match status" value="1"/>
</dbReference>
<dbReference type="Gene3D" id="3.30.1490.100">
    <property type="entry name" value="DNA polymerase, Y-family, little finger domain"/>
    <property type="match status" value="1"/>
</dbReference>
<dbReference type="HAMAP" id="MF_01113">
    <property type="entry name" value="DNApol_IV"/>
    <property type="match status" value="1"/>
</dbReference>
<dbReference type="InterPro" id="IPR043502">
    <property type="entry name" value="DNA/RNA_pol_sf"/>
</dbReference>
<dbReference type="InterPro" id="IPR036775">
    <property type="entry name" value="DNA_pol_Y-fam_lit_finger_sf"/>
</dbReference>
<dbReference type="InterPro" id="IPR017961">
    <property type="entry name" value="DNA_pol_Y-fam_little_finger"/>
</dbReference>
<dbReference type="InterPro" id="IPR050116">
    <property type="entry name" value="DNA_polymerase-Y"/>
</dbReference>
<dbReference type="InterPro" id="IPR022880">
    <property type="entry name" value="DNApol_IV"/>
</dbReference>
<dbReference type="InterPro" id="IPR053848">
    <property type="entry name" value="IMS_HHH_1"/>
</dbReference>
<dbReference type="InterPro" id="IPR043128">
    <property type="entry name" value="Rev_trsase/Diguanyl_cyclase"/>
</dbReference>
<dbReference type="InterPro" id="IPR001126">
    <property type="entry name" value="UmuC"/>
</dbReference>
<dbReference type="NCBIfam" id="NF002677">
    <property type="entry name" value="PRK02406.1"/>
    <property type="match status" value="1"/>
</dbReference>
<dbReference type="PANTHER" id="PTHR11076:SF33">
    <property type="entry name" value="DNA POLYMERASE KAPPA"/>
    <property type="match status" value="1"/>
</dbReference>
<dbReference type="PANTHER" id="PTHR11076">
    <property type="entry name" value="DNA REPAIR POLYMERASE UMUC / TRANSFERASE FAMILY MEMBER"/>
    <property type="match status" value="1"/>
</dbReference>
<dbReference type="Pfam" id="PF00817">
    <property type="entry name" value="IMS"/>
    <property type="match status" value="1"/>
</dbReference>
<dbReference type="Pfam" id="PF11799">
    <property type="entry name" value="IMS_C"/>
    <property type="match status" value="1"/>
</dbReference>
<dbReference type="Pfam" id="PF21999">
    <property type="entry name" value="IMS_HHH_1"/>
    <property type="match status" value="1"/>
</dbReference>
<dbReference type="SUPFAM" id="SSF56672">
    <property type="entry name" value="DNA/RNA polymerases"/>
    <property type="match status" value="1"/>
</dbReference>
<dbReference type="SUPFAM" id="SSF100879">
    <property type="entry name" value="Lesion bypass DNA polymerase (Y-family), little finger domain"/>
    <property type="match status" value="1"/>
</dbReference>
<dbReference type="PROSITE" id="PS50173">
    <property type="entry name" value="UMUC"/>
    <property type="match status" value="1"/>
</dbReference>
<name>DPO4_XANCP</name>
<comment type="function">
    <text evidence="1">Poorly processive, error-prone DNA polymerase involved in untargeted mutagenesis. Copies undamaged DNA at stalled replication forks, which arise in vivo from mismatched or misaligned primer ends. These misaligned primers can be extended by PolIV. Exhibits no 3'-5' exonuclease (proofreading) activity. May be involved in translesional synthesis, in conjunction with the beta clamp from PolIII.</text>
</comment>
<comment type="catalytic activity">
    <reaction evidence="1">
        <text>DNA(n) + a 2'-deoxyribonucleoside 5'-triphosphate = DNA(n+1) + diphosphate</text>
        <dbReference type="Rhea" id="RHEA:22508"/>
        <dbReference type="Rhea" id="RHEA-COMP:17339"/>
        <dbReference type="Rhea" id="RHEA-COMP:17340"/>
        <dbReference type="ChEBI" id="CHEBI:33019"/>
        <dbReference type="ChEBI" id="CHEBI:61560"/>
        <dbReference type="ChEBI" id="CHEBI:173112"/>
        <dbReference type="EC" id="2.7.7.7"/>
    </reaction>
</comment>
<comment type="cofactor">
    <cofactor evidence="1">
        <name>Mg(2+)</name>
        <dbReference type="ChEBI" id="CHEBI:18420"/>
    </cofactor>
    <text evidence="1">Binds 2 magnesium ions per subunit.</text>
</comment>
<comment type="subunit">
    <text evidence="1">Monomer.</text>
</comment>
<comment type="subcellular location">
    <subcellularLocation>
        <location evidence="1">Cytoplasm</location>
    </subcellularLocation>
</comment>
<comment type="similarity">
    <text evidence="1">Belongs to the DNA polymerase type-Y family.</text>
</comment>
<evidence type="ECO:0000255" key="1">
    <source>
        <dbReference type="HAMAP-Rule" id="MF_01113"/>
    </source>
</evidence>
<sequence length="359" mass="39958">MRKIVHVDMDAFYASVEQRDDPSLRGKPVVVAWRGARSVVCAASYEARTFGIRSAMPAVRAERLCPDAVFVPPDFARYKAVSRQVREIFHRHTDLVEPLSLDEAYLDVTEAKTGMQLATEIAQLIRTQIREETQLTASAGIAPNKFLAKIASDWRKPDGQFVIAPSRVDAFLLPLPVNRIPGVGKVMDGKLAALGIVTVSDLRLRPLEELQAHFGSFGQSLYRRARGIDERPVEPDQEVQSVSSEDTFSEDLALDALDPHIQRLAEKTWHATRRTERIGRTVVLKLKTSNFRILTRSYTPEQPPASLQGLVDIALGLTRRVELPPETRYRLVGVGLSGFSDPELQAAVQGELFGEVPQQ</sequence>
<protein>
    <recommendedName>
        <fullName evidence="1">DNA polymerase IV</fullName>
        <shortName evidence="1">Pol IV</shortName>
        <ecNumber evidence="1">2.7.7.7</ecNumber>
    </recommendedName>
</protein>